<organism>
    <name type="scientific">Ralstonia nicotianae (strain ATCC BAA-1114 / GMI1000)</name>
    <name type="common">Ralstonia solanacearum</name>
    <dbReference type="NCBI Taxonomy" id="267608"/>
    <lineage>
        <taxon>Bacteria</taxon>
        <taxon>Pseudomonadati</taxon>
        <taxon>Pseudomonadota</taxon>
        <taxon>Betaproteobacteria</taxon>
        <taxon>Burkholderiales</taxon>
        <taxon>Burkholderiaceae</taxon>
        <taxon>Ralstonia</taxon>
        <taxon>Ralstonia solanacearum species complex</taxon>
    </lineage>
</organism>
<proteinExistence type="inferred from homology"/>
<protein>
    <recommendedName>
        <fullName evidence="1">Homogentisate 1,2-dioxygenase</fullName>
        <shortName evidence="1">HGDO</shortName>
        <ecNumber evidence="1">1.13.11.5</ecNumber>
    </recommendedName>
    <alternativeName>
        <fullName evidence="1">Homogentisate oxygenase</fullName>
    </alternativeName>
    <alternativeName>
        <fullName evidence="1">Homogentisic acid oxidase</fullName>
    </alternativeName>
    <alternativeName>
        <fullName evidence="1">Homogentisicase</fullName>
    </alternativeName>
</protein>
<evidence type="ECO:0000255" key="1">
    <source>
        <dbReference type="HAMAP-Rule" id="MF_00334"/>
    </source>
</evidence>
<evidence type="ECO:0000256" key="2">
    <source>
        <dbReference type="SAM" id="MobiDB-lite"/>
    </source>
</evidence>
<reference key="1">
    <citation type="journal article" date="2002" name="Nature">
        <title>Genome sequence of the plant pathogen Ralstonia solanacearum.</title>
        <authorList>
            <person name="Salanoubat M."/>
            <person name="Genin S."/>
            <person name="Artiguenave F."/>
            <person name="Gouzy J."/>
            <person name="Mangenot S."/>
            <person name="Arlat M."/>
            <person name="Billault A."/>
            <person name="Brottier P."/>
            <person name="Camus J.-C."/>
            <person name="Cattolico L."/>
            <person name="Chandler M."/>
            <person name="Choisne N."/>
            <person name="Claudel-Renard C."/>
            <person name="Cunnac S."/>
            <person name="Demange N."/>
            <person name="Gaspin C."/>
            <person name="Lavie M."/>
            <person name="Moisan A."/>
            <person name="Robert C."/>
            <person name="Saurin W."/>
            <person name="Schiex T."/>
            <person name="Siguier P."/>
            <person name="Thebault P."/>
            <person name="Whalen M."/>
            <person name="Wincker P."/>
            <person name="Levy M."/>
            <person name="Weissenbach J."/>
            <person name="Boucher C.A."/>
        </authorList>
    </citation>
    <scope>NUCLEOTIDE SEQUENCE [LARGE SCALE GENOMIC DNA]</scope>
    <source>
        <strain>ATCC BAA-1114 / GMI1000</strain>
    </source>
</reference>
<sequence>MNMLAPAAKNAFTPASPDRPAYQSGFGNEFATEALPGALPHGQNSPQQAPYGLYAEQLSGTAFTAPRAHNRRAWLYRIRPAAVHLPFEPIAQDRFHSDFHAVPASPNQLRWDPLPAPAAGTDFIDGIVTFAGNGGPDAQTGCGIHLYAANASMTGRFFYNADGELLIVPQQGRLRLLTELGVLDVEPLEIAVIPRGVRFRVELPDGEARGYLCENFGAIFRLPDLGVIGSNGLANPRDFLTPHAWYEDREGDFELVAKFHGNLWRARIGHSPLDVVAWHGNYAPYKYDLRLFNTIGSISYDHPDPSIFLVLQSVSDTPGVDAIDFVIFPPRWLAMEHSFRPPWFHRNIASEFMGLIQGVYDAKAEGFVPGGASLHNCMTGHGPDAETFEKASHADTTQPHKVEATMAFMFETRGVIRPTRFAAESAQLQARYFECWQGLKKHFDPAKR</sequence>
<gene>
    <name evidence="1" type="primary">hmgA</name>
    <name type="ordered locus">RSp0691</name>
    <name type="ORF">RS01758</name>
</gene>
<accession>Q8XRZ0</accession>
<feature type="chain" id="PRO_0000220252" description="Homogentisate 1,2-dioxygenase">
    <location>
        <begin position="1"/>
        <end position="448"/>
    </location>
</feature>
<feature type="region of interest" description="Disordered" evidence="2">
    <location>
        <begin position="1"/>
        <end position="26"/>
    </location>
</feature>
<feature type="active site" description="Proton acceptor" evidence="1">
    <location>
        <position position="302"/>
    </location>
</feature>
<feature type="binding site" evidence="1">
    <location>
        <position position="345"/>
    </location>
    <ligand>
        <name>Fe cation</name>
        <dbReference type="ChEBI" id="CHEBI:24875"/>
    </ligand>
</feature>
<feature type="binding site" evidence="1">
    <location>
        <position position="351"/>
    </location>
    <ligand>
        <name>Fe cation</name>
        <dbReference type="ChEBI" id="CHEBI:24875"/>
    </ligand>
</feature>
<feature type="binding site" evidence="1">
    <location>
        <position position="360"/>
    </location>
    <ligand>
        <name>homogentisate</name>
        <dbReference type="ChEBI" id="CHEBI:16169"/>
    </ligand>
</feature>
<feature type="binding site" evidence="1">
    <location>
        <position position="381"/>
    </location>
    <ligand>
        <name>Fe cation</name>
        <dbReference type="ChEBI" id="CHEBI:24875"/>
    </ligand>
</feature>
<feature type="binding site" evidence="1">
    <location>
        <position position="381"/>
    </location>
    <ligand>
        <name>homogentisate</name>
        <dbReference type="ChEBI" id="CHEBI:16169"/>
    </ligand>
</feature>
<keyword id="KW-0223">Dioxygenase</keyword>
<keyword id="KW-0408">Iron</keyword>
<keyword id="KW-0479">Metal-binding</keyword>
<keyword id="KW-0560">Oxidoreductase</keyword>
<keyword id="KW-0585">Phenylalanine catabolism</keyword>
<keyword id="KW-0614">Plasmid</keyword>
<keyword id="KW-1185">Reference proteome</keyword>
<keyword id="KW-0828">Tyrosine catabolism</keyword>
<dbReference type="EC" id="1.13.11.5" evidence="1"/>
<dbReference type="EMBL" id="AL646053">
    <property type="protein sequence ID" value="CAD17842.1"/>
    <property type="molecule type" value="Genomic_DNA"/>
</dbReference>
<dbReference type="RefSeq" id="WP_011003989.1">
    <property type="nucleotide sequence ID" value="NC_003296.1"/>
</dbReference>
<dbReference type="SMR" id="Q8XRZ0"/>
<dbReference type="STRING" id="267608.RSp0691"/>
<dbReference type="EnsemblBacteria" id="CAD17842">
    <property type="protein sequence ID" value="CAD17842"/>
    <property type="gene ID" value="RSp0691"/>
</dbReference>
<dbReference type="KEGG" id="rso:RSp0691"/>
<dbReference type="eggNOG" id="COG3508">
    <property type="taxonomic scope" value="Bacteria"/>
</dbReference>
<dbReference type="HOGENOM" id="CLU_027174_0_0_4"/>
<dbReference type="UniPathway" id="UPA00139">
    <property type="reaction ID" value="UER00339"/>
</dbReference>
<dbReference type="Proteomes" id="UP000001436">
    <property type="component" value="Plasmid megaplasmid Rsp"/>
</dbReference>
<dbReference type="GO" id="GO:0005737">
    <property type="term" value="C:cytoplasm"/>
    <property type="evidence" value="ECO:0007669"/>
    <property type="project" value="TreeGrafter"/>
</dbReference>
<dbReference type="GO" id="GO:0004411">
    <property type="term" value="F:homogentisate 1,2-dioxygenase activity"/>
    <property type="evidence" value="ECO:0007669"/>
    <property type="project" value="UniProtKB-UniRule"/>
</dbReference>
<dbReference type="GO" id="GO:0005506">
    <property type="term" value="F:iron ion binding"/>
    <property type="evidence" value="ECO:0007669"/>
    <property type="project" value="UniProtKB-UniRule"/>
</dbReference>
<dbReference type="GO" id="GO:0006559">
    <property type="term" value="P:L-phenylalanine catabolic process"/>
    <property type="evidence" value="ECO:0007669"/>
    <property type="project" value="UniProtKB-UniRule"/>
</dbReference>
<dbReference type="GO" id="GO:0006572">
    <property type="term" value="P:tyrosine catabolic process"/>
    <property type="evidence" value="ECO:0007669"/>
    <property type="project" value="UniProtKB-UniRule"/>
</dbReference>
<dbReference type="CDD" id="cd07000">
    <property type="entry name" value="cupin_HGO_N"/>
    <property type="match status" value="1"/>
</dbReference>
<dbReference type="FunFam" id="2.60.120.10:FF:000034">
    <property type="entry name" value="Homogentisate 1,2-dioxygenase"/>
    <property type="match status" value="1"/>
</dbReference>
<dbReference type="Gene3D" id="2.60.120.10">
    <property type="entry name" value="Jelly Rolls"/>
    <property type="match status" value="1"/>
</dbReference>
<dbReference type="HAMAP" id="MF_00334">
    <property type="entry name" value="Homogentis_dioxygen"/>
    <property type="match status" value="1"/>
</dbReference>
<dbReference type="InterPro" id="IPR046451">
    <property type="entry name" value="HgmA_C"/>
</dbReference>
<dbReference type="InterPro" id="IPR046452">
    <property type="entry name" value="HgmA_N"/>
</dbReference>
<dbReference type="InterPro" id="IPR005708">
    <property type="entry name" value="Homogentis_dOase"/>
</dbReference>
<dbReference type="InterPro" id="IPR022950">
    <property type="entry name" value="Homogentis_dOase_bac"/>
</dbReference>
<dbReference type="InterPro" id="IPR014710">
    <property type="entry name" value="RmlC-like_jellyroll"/>
</dbReference>
<dbReference type="InterPro" id="IPR011051">
    <property type="entry name" value="RmlC_Cupin_sf"/>
</dbReference>
<dbReference type="NCBIfam" id="TIGR01015">
    <property type="entry name" value="hmgA"/>
    <property type="match status" value="1"/>
</dbReference>
<dbReference type="PANTHER" id="PTHR11056">
    <property type="entry name" value="HOMOGENTISATE 1,2-DIOXYGENASE"/>
    <property type="match status" value="1"/>
</dbReference>
<dbReference type="PANTHER" id="PTHR11056:SF0">
    <property type="entry name" value="HOMOGENTISATE 1,2-DIOXYGENASE"/>
    <property type="match status" value="1"/>
</dbReference>
<dbReference type="Pfam" id="PF04209">
    <property type="entry name" value="HgmA_C"/>
    <property type="match status" value="1"/>
</dbReference>
<dbReference type="Pfam" id="PF20510">
    <property type="entry name" value="HgmA_N"/>
    <property type="match status" value="1"/>
</dbReference>
<dbReference type="SUPFAM" id="SSF51182">
    <property type="entry name" value="RmlC-like cupins"/>
    <property type="match status" value="1"/>
</dbReference>
<comment type="function">
    <text evidence="1">Involved in the catabolism of homogentisate (2,5-dihydroxyphenylacetate or 2,5-OH-PhAc), a central intermediate in the degradation of phenylalanine and tyrosine. Catalyzes the oxidative ring cleavage of the aromatic ring of homogentisate to yield maleylacetoacetate.</text>
</comment>
<comment type="catalytic activity">
    <reaction evidence="1">
        <text>homogentisate + O2 = 4-maleylacetoacetate + H(+)</text>
        <dbReference type="Rhea" id="RHEA:15449"/>
        <dbReference type="ChEBI" id="CHEBI:15378"/>
        <dbReference type="ChEBI" id="CHEBI:15379"/>
        <dbReference type="ChEBI" id="CHEBI:16169"/>
        <dbReference type="ChEBI" id="CHEBI:17105"/>
        <dbReference type="EC" id="1.13.11.5"/>
    </reaction>
</comment>
<comment type="cofactor">
    <cofactor evidence="1">
        <name>Fe cation</name>
        <dbReference type="ChEBI" id="CHEBI:24875"/>
    </cofactor>
</comment>
<comment type="pathway">
    <text evidence="1">Amino-acid degradation; L-phenylalanine degradation; acetoacetate and fumarate from L-phenylalanine: step 4/6.</text>
</comment>
<comment type="subunit">
    <text evidence="1">Hexamer; dimer of trimers.</text>
</comment>
<comment type="similarity">
    <text evidence="1">Belongs to the homogentisate dioxygenase family.</text>
</comment>
<name>HGD_RALN1</name>
<geneLocation type="plasmid">
    <name>megaplasmid Rsp</name>
</geneLocation>